<gene>
    <name evidence="1" type="primary">ssuD</name>
    <name type="ordered locus">PC1_0025</name>
</gene>
<comment type="function">
    <text evidence="1">Catalyzes the desulfonation of aliphatic sulfonates.</text>
</comment>
<comment type="catalytic activity">
    <reaction evidence="1">
        <text>an alkanesulfonate + FMNH2 + O2 = an aldehyde + FMN + sulfite + H2O + 2 H(+)</text>
        <dbReference type="Rhea" id="RHEA:23064"/>
        <dbReference type="ChEBI" id="CHEBI:15377"/>
        <dbReference type="ChEBI" id="CHEBI:15378"/>
        <dbReference type="ChEBI" id="CHEBI:15379"/>
        <dbReference type="ChEBI" id="CHEBI:17359"/>
        <dbReference type="ChEBI" id="CHEBI:17478"/>
        <dbReference type="ChEBI" id="CHEBI:57618"/>
        <dbReference type="ChEBI" id="CHEBI:58210"/>
        <dbReference type="ChEBI" id="CHEBI:134249"/>
        <dbReference type="EC" id="1.14.14.5"/>
    </reaction>
</comment>
<comment type="subunit">
    <text evidence="1">Homotetramer.</text>
</comment>
<comment type="miscellaneous">
    <text evidence="1">FMNH(2) which is absolutely required for this enzymatic reaction, is provided by SsuE.</text>
</comment>
<comment type="similarity">
    <text evidence="1">Belongs to the SsuD family.</text>
</comment>
<protein>
    <recommendedName>
        <fullName evidence="1">Alkanesulfonate monooxygenase</fullName>
        <ecNumber evidence="1">1.14.14.5</ecNumber>
    </recommendedName>
    <alternativeName>
        <fullName evidence="1">FMNH2-dependent aliphatic sulfonate monooxygenase</fullName>
    </alternativeName>
</protein>
<evidence type="ECO:0000255" key="1">
    <source>
        <dbReference type="HAMAP-Rule" id="MF_01229"/>
    </source>
</evidence>
<keyword id="KW-0285">Flavoprotein</keyword>
<keyword id="KW-0288">FMN</keyword>
<keyword id="KW-0503">Monooxygenase</keyword>
<keyword id="KW-0560">Oxidoreductase</keyword>
<proteinExistence type="inferred from homology"/>
<reference key="1">
    <citation type="submission" date="2009-07" db="EMBL/GenBank/DDBJ databases">
        <title>Complete sequence of Pectobacterium carotovorum subsp. carotovorum PC1.</title>
        <authorList>
            <consortium name="US DOE Joint Genome Institute"/>
            <person name="Lucas S."/>
            <person name="Copeland A."/>
            <person name="Lapidus A."/>
            <person name="Glavina del Rio T."/>
            <person name="Tice H."/>
            <person name="Bruce D."/>
            <person name="Goodwin L."/>
            <person name="Pitluck S."/>
            <person name="Munk A.C."/>
            <person name="Brettin T."/>
            <person name="Detter J.C."/>
            <person name="Han C."/>
            <person name="Tapia R."/>
            <person name="Larimer F."/>
            <person name="Land M."/>
            <person name="Hauser L."/>
            <person name="Kyrpides N."/>
            <person name="Mikhailova N."/>
            <person name="Balakrishnan V."/>
            <person name="Glasner J."/>
            <person name="Perna N.T."/>
        </authorList>
    </citation>
    <scope>NUCLEOTIDE SEQUENCE [LARGE SCALE GENOMIC DNA]</scope>
    <source>
        <strain>PC1</strain>
    </source>
</reference>
<dbReference type="EC" id="1.14.14.5" evidence="1"/>
<dbReference type="EMBL" id="CP001657">
    <property type="protein sequence ID" value="ACT11088.1"/>
    <property type="molecule type" value="Genomic_DNA"/>
</dbReference>
<dbReference type="RefSeq" id="WP_012772771.1">
    <property type="nucleotide sequence ID" value="NC_012917.1"/>
</dbReference>
<dbReference type="SMR" id="C6DGK1"/>
<dbReference type="STRING" id="561230.PC1_0025"/>
<dbReference type="KEGG" id="pct:PC1_0025"/>
<dbReference type="eggNOG" id="COG2141">
    <property type="taxonomic scope" value="Bacteria"/>
</dbReference>
<dbReference type="HOGENOM" id="CLU_027853_1_0_6"/>
<dbReference type="OrthoDB" id="9814695at2"/>
<dbReference type="Proteomes" id="UP000002736">
    <property type="component" value="Chromosome"/>
</dbReference>
<dbReference type="GO" id="GO:0008726">
    <property type="term" value="F:alkanesulfonate monooxygenase activity"/>
    <property type="evidence" value="ECO:0007669"/>
    <property type="project" value="UniProtKB-UniRule"/>
</dbReference>
<dbReference type="GO" id="GO:0046306">
    <property type="term" value="P:alkanesulfonate catabolic process"/>
    <property type="evidence" value="ECO:0007669"/>
    <property type="project" value="TreeGrafter"/>
</dbReference>
<dbReference type="CDD" id="cd01094">
    <property type="entry name" value="Alkanesulfonate_monoxygenase"/>
    <property type="match status" value="1"/>
</dbReference>
<dbReference type="FunFam" id="3.20.20.30:FF:000001">
    <property type="entry name" value="Alkanesulfonate monooxygenase"/>
    <property type="match status" value="1"/>
</dbReference>
<dbReference type="Gene3D" id="3.20.20.30">
    <property type="entry name" value="Luciferase-like domain"/>
    <property type="match status" value="1"/>
</dbReference>
<dbReference type="HAMAP" id="MF_01229">
    <property type="entry name" value="Alkanesulf_monooxygen"/>
    <property type="match status" value="1"/>
</dbReference>
<dbReference type="InterPro" id="IPR019911">
    <property type="entry name" value="Alkanesulphonate_mOase_FMN-dep"/>
</dbReference>
<dbReference type="InterPro" id="IPR011251">
    <property type="entry name" value="Luciferase-like_dom"/>
</dbReference>
<dbReference type="InterPro" id="IPR036661">
    <property type="entry name" value="Luciferase-like_sf"/>
</dbReference>
<dbReference type="InterPro" id="IPR050172">
    <property type="entry name" value="SsuD_RutA_monooxygenase"/>
</dbReference>
<dbReference type="NCBIfam" id="TIGR03565">
    <property type="entry name" value="alk_sulf_monoox"/>
    <property type="match status" value="1"/>
</dbReference>
<dbReference type="NCBIfam" id="NF001939">
    <property type="entry name" value="PRK00719.1"/>
    <property type="match status" value="1"/>
</dbReference>
<dbReference type="PANTHER" id="PTHR42847">
    <property type="entry name" value="ALKANESULFONATE MONOOXYGENASE"/>
    <property type="match status" value="1"/>
</dbReference>
<dbReference type="PANTHER" id="PTHR42847:SF4">
    <property type="entry name" value="ALKANESULFONATE MONOOXYGENASE-RELATED"/>
    <property type="match status" value="1"/>
</dbReference>
<dbReference type="Pfam" id="PF00296">
    <property type="entry name" value="Bac_luciferase"/>
    <property type="match status" value="1"/>
</dbReference>
<dbReference type="SUPFAM" id="SSF51679">
    <property type="entry name" value="Bacterial luciferase-like"/>
    <property type="match status" value="1"/>
</dbReference>
<sequence length="380" mass="41612">MSLNVFWFLPTHGDGRYLGSTEGARHVDYGYLQQVAQAAERQGFGGVLLPTGRSCEDSWLVAASLIPVTQRLKFLVALRPGVISPTIAARQAATLDRLSNGRALFNLVTGGDPEELAAEGLFLSHEERYEASAEFTHIWRRLLEGETVDFAGKHIQVKDAKLLYPPVQQPRPPLYFGGSSEAAQNLAAEQVDLYLTWGEPPEQVKEKLAEVRDKAAAQGREVRFGIRLHVIVRETTEEAWQAADRLISHLDEKTIADAQAALARFDSVGQQRMAALHGGKKDKLEISPNLWAGIGLVRGGAGTALVGDGPTVAERIQEYADLGIDTFILSGYPHLEEAYRVGELLFPHLDLAQQPTPLHAVNNAGEVVANRYVPRKVSQS</sequence>
<accession>C6DGK1</accession>
<organism>
    <name type="scientific">Pectobacterium carotovorum subsp. carotovorum (strain PC1)</name>
    <dbReference type="NCBI Taxonomy" id="561230"/>
    <lineage>
        <taxon>Bacteria</taxon>
        <taxon>Pseudomonadati</taxon>
        <taxon>Pseudomonadota</taxon>
        <taxon>Gammaproteobacteria</taxon>
        <taxon>Enterobacterales</taxon>
        <taxon>Pectobacteriaceae</taxon>
        <taxon>Pectobacterium</taxon>
    </lineage>
</organism>
<feature type="chain" id="PRO_1000214023" description="Alkanesulfonate monooxygenase">
    <location>
        <begin position="1"/>
        <end position="380"/>
    </location>
</feature>
<name>SSUD_PECCP</name>